<accession>Q0VCB1</accession>
<proteinExistence type="evidence at transcript level"/>
<organism>
    <name type="scientific">Bos taurus</name>
    <name type="common">Bovine</name>
    <dbReference type="NCBI Taxonomy" id="9913"/>
    <lineage>
        <taxon>Eukaryota</taxon>
        <taxon>Metazoa</taxon>
        <taxon>Chordata</taxon>
        <taxon>Craniata</taxon>
        <taxon>Vertebrata</taxon>
        <taxon>Euteleostomi</taxon>
        <taxon>Mammalia</taxon>
        <taxon>Eutheria</taxon>
        <taxon>Laurasiatheria</taxon>
        <taxon>Artiodactyla</taxon>
        <taxon>Ruminantia</taxon>
        <taxon>Pecora</taxon>
        <taxon>Bovidae</taxon>
        <taxon>Bovinae</taxon>
        <taxon>Bos</taxon>
    </lineage>
</organism>
<reference key="1">
    <citation type="submission" date="2006-08" db="EMBL/GenBank/DDBJ databases">
        <authorList>
            <consortium name="NIH - Mammalian Gene Collection (MGC) project"/>
        </authorList>
    </citation>
    <scope>NUCLEOTIDE SEQUENCE [LARGE SCALE MRNA]</scope>
    <source>
        <strain>Hereford</strain>
        <tissue>Fetal liver</tissue>
    </source>
</reference>
<keyword id="KW-1003">Cell membrane</keyword>
<keyword id="KW-1015">Disulfide bond</keyword>
<keyword id="KW-0325">Glycoprotein</keyword>
<keyword id="KW-0393">Immunoglobulin domain</keyword>
<keyword id="KW-0472">Membrane</keyword>
<keyword id="KW-1185">Reference proteome</keyword>
<keyword id="KW-0732">Signal</keyword>
<keyword id="KW-0812">Transmembrane</keyword>
<keyword id="KW-1133">Transmembrane helix</keyword>
<comment type="function">
    <text evidence="2">Essential fertilization factor required for male fertility. Part of a conserved trimeric sperm complex with the essential fertilization factors IZUMO1 and SPACA6 which bridges sperm and oocyte membranes during fertilization by binding to IZUMO1R/JUNO on the oocyte.</text>
</comment>
<comment type="subunit">
    <text evidence="2">Forms a complex with IZUMO1 and SPACA6 on spermatocyte cell membrane required for fertilization.</text>
</comment>
<comment type="subcellular location">
    <subcellularLocation>
        <location evidence="1">Cell membrane</location>
        <topology evidence="3">Single-pass type I membrane protein</topology>
    </subcellularLocation>
</comment>
<feature type="signal peptide" evidence="3">
    <location>
        <begin position="1"/>
        <end position="24"/>
    </location>
</feature>
<feature type="chain" id="PRO_0000287875" description="Transmembrane protein 81">
    <location>
        <begin position="25"/>
        <end position="276"/>
    </location>
</feature>
<feature type="topological domain" description="Extracellular" evidence="3">
    <location>
        <begin position="25"/>
        <end position="225"/>
    </location>
</feature>
<feature type="transmembrane region" description="Helical" evidence="3">
    <location>
        <begin position="226"/>
        <end position="246"/>
    </location>
</feature>
<feature type="topological domain" description="Cytoplasmic" evidence="3">
    <location>
        <begin position="247"/>
        <end position="276"/>
    </location>
</feature>
<feature type="domain" description="Ig-like">
    <location>
        <begin position="83"/>
        <end position="176"/>
    </location>
</feature>
<feature type="glycosylation site" description="N-linked (GlcNAc...) asparagine" evidence="3">
    <location>
        <position position="45"/>
    </location>
</feature>
<feature type="glycosylation site" description="N-linked (GlcNAc...) asparagine" evidence="3">
    <location>
        <position position="211"/>
    </location>
</feature>
<feature type="disulfide bond" evidence="4">
    <location>
        <begin position="104"/>
        <end position="160"/>
    </location>
</feature>
<protein>
    <recommendedName>
        <fullName>Transmembrane protein 81</fullName>
    </recommendedName>
</protein>
<name>TMM81_BOVIN</name>
<dbReference type="EMBL" id="BC120262">
    <property type="protein sequence ID" value="AAI20263.1"/>
    <property type="molecule type" value="mRNA"/>
</dbReference>
<dbReference type="RefSeq" id="NP_001068933.1">
    <property type="nucleotide sequence ID" value="NM_001075465.2"/>
</dbReference>
<dbReference type="FunCoup" id="Q0VCB1">
    <property type="interactions" value="583"/>
</dbReference>
<dbReference type="STRING" id="9913.ENSBTAP00000021201"/>
<dbReference type="GlyCosmos" id="Q0VCB1">
    <property type="glycosylation" value="2 sites, No reported glycans"/>
</dbReference>
<dbReference type="GlyGen" id="Q0VCB1">
    <property type="glycosylation" value="2 sites"/>
</dbReference>
<dbReference type="PaxDb" id="9913-ENSBTAP00000021201"/>
<dbReference type="Ensembl" id="ENSBTAT00000021201.4">
    <property type="protein sequence ID" value="ENSBTAP00000021201.4"/>
    <property type="gene ID" value="ENSBTAG00000015945.4"/>
</dbReference>
<dbReference type="GeneID" id="510784"/>
<dbReference type="KEGG" id="bta:510784"/>
<dbReference type="CTD" id="388730"/>
<dbReference type="VEuPathDB" id="HostDB:ENSBTAG00000015945"/>
<dbReference type="VGNC" id="VGNC:36114">
    <property type="gene designation" value="TMEM81"/>
</dbReference>
<dbReference type="eggNOG" id="ENOG502RYDZ">
    <property type="taxonomic scope" value="Eukaryota"/>
</dbReference>
<dbReference type="GeneTree" id="ENSGT00390000006349"/>
<dbReference type="InParanoid" id="Q0VCB1"/>
<dbReference type="OMA" id="ECLTNWL"/>
<dbReference type="OrthoDB" id="9390762at2759"/>
<dbReference type="Proteomes" id="UP000009136">
    <property type="component" value="Chromosome 16"/>
</dbReference>
<dbReference type="Bgee" id="ENSBTAG00000015945">
    <property type="expression patterns" value="Expressed in spermatid and 96 other cell types or tissues"/>
</dbReference>
<dbReference type="GO" id="GO:0005886">
    <property type="term" value="C:plasma membrane"/>
    <property type="evidence" value="ECO:0007669"/>
    <property type="project" value="UniProtKB-SubCell"/>
</dbReference>
<dbReference type="GO" id="GO:0030674">
    <property type="term" value="F:protein-macromolecule adaptor activity"/>
    <property type="evidence" value="ECO:0007669"/>
    <property type="project" value="Ensembl"/>
</dbReference>
<dbReference type="GO" id="GO:0035036">
    <property type="term" value="P:sperm-egg recognition"/>
    <property type="evidence" value="ECO:0000250"/>
    <property type="project" value="UniProtKB"/>
</dbReference>
<dbReference type="CDD" id="cd00096">
    <property type="entry name" value="Ig"/>
    <property type="match status" value="1"/>
</dbReference>
<dbReference type="InterPro" id="IPR007110">
    <property type="entry name" value="Ig-like_dom"/>
</dbReference>
<dbReference type="InterPro" id="IPR036179">
    <property type="entry name" value="Ig-like_dom_sf"/>
</dbReference>
<dbReference type="InterPro" id="IPR039293">
    <property type="entry name" value="TMEM81"/>
</dbReference>
<dbReference type="PANTHER" id="PTHR35670">
    <property type="entry name" value="TRANSMEMBRANE PROTEIN 81"/>
    <property type="match status" value="1"/>
</dbReference>
<dbReference type="PANTHER" id="PTHR35670:SF1">
    <property type="entry name" value="TRANSMEMBRANE PROTEIN 81"/>
    <property type="match status" value="1"/>
</dbReference>
<dbReference type="SUPFAM" id="SSF48726">
    <property type="entry name" value="Immunoglobulin"/>
    <property type="match status" value="1"/>
</dbReference>
<dbReference type="PROSITE" id="PS50835">
    <property type="entry name" value="IG_LIKE"/>
    <property type="match status" value="1"/>
</dbReference>
<gene>
    <name type="primary">TMEM81</name>
</gene>
<evidence type="ECO:0000250" key="1">
    <source>
        <dbReference type="UniProtKB" id="B8JI67"/>
    </source>
</evidence>
<evidence type="ECO:0000250" key="2">
    <source>
        <dbReference type="UniProtKB" id="Q6P7N7"/>
    </source>
</evidence>
<evidence type="ECO:0000255" key="3"/>
<evidence type="ECO:0000255" key="4">
    <source>
        <dbReference type="PROSITE-ProRule" id="PRU00114"/>
    </source>
</evidence>
<sequence>MKTSATSFIPGSLVLAFCLPVVATSPKTLAIPEKLQEAVGKVTVNATTCTVICGLGFKEETVCEVGPDGVRRKCKSQRLECLTNWLCGMLHFTLLIGKEFKLSCLSPDILEIGQGAFRFTWRLARGIISTDDEVFKPFRASSYFIKFQSIQEYDSGTYRCDVQLLKNLRLVKRLYFGLRVLPPNLVNLNFHQSLTEDQKLVDEGLEVNLDNYSRPQHPPWKKKVAIAVGIGVAGGVTGGVLVSIVLCGRLSVIHSSASLETLQALLPKGGMLRKPD</sequence>